<comment type="function">
    <text evidence="2">Glutamine synthetase (GS) is an unusual multitasking protein that functions as an enzyme, a transcription coregulator, and a chaperone in ammonium assimilation and in the regulation of genes involved in nitrogen metabolism. It catalyzes the ATP-dependent biosynthesis of glutamine from glutamate and ammonia. Feedback-inhibited GlnA also interacts with and regulates the activity of the transcriptional regulator TnrA. During nitrogen limitation, TnrA is in its DNA-binding active state and turns on the transcription of genes required for nitrogen assimilation. Under conditions of nitrogen excess, feedback-inhibited GlnA forms a stable complex with TnrA, which inhibits its DNA-binding activity. In contrast, feedback-inhibited GlnA acts as a chaperone to stabilize the DNA-binding activity of GlnR, which represses the transcription of nitrogen assimilation genes.</text>
</comment>
<comment type="catalytic activity">
    <reaction evidence="2">
        <text>L-glutamate + NH4(+) + ATP = L-glutamine + ADP + phosphate + H(+)</text>
        <dbReference type="Rhea" id="RHEA:16169"/>
        <dbReference type="ChEBI" id="CHEBI:15378"/>
        <dbReference type="ChEBI" id="CHEBI:28938"/>
        <dbReference type="ChEBI" id="CHEBI:29985"/>
        <dbReference type="ChEBI" id="CHEBI:30616"/>
        <dbReference type="ChEBI" id="CHEBI:43474"/>
        <dbReference type="ChEBI" id="CHEBI:58359"/>
        <dbReference type="ChEBI" id="CHEBI:456216"/>
        <dbReference type="EC" id="6.3.1.2"/>
    </reaction>
</comment>
<comment type="cofactor">
    <cofactor evidence="2">
        <name>Mg(2+)</name>
        <dbReference type="ChEBI" id="CHEBI:18420"/>
    </cofactor>
    <text evidence="2">Binds 2 Mg(2+) ions per subunit.</text>
</comment>
<comment type="activity regulation">
    <text evidence="2">Inhibited by glutamine.</text>
</comment>
<comment type="subunit">
    <text evidence="2">Oligomer of 12 subunits arranged in the form of two hexagons. In its feedback-inhibited form, interacts with TnrA in order to block its DNA-binding activity.</text>
</comment>
<comment type="subcellular location">
    <subcellularLocation>
        <location evidence="2">Cytoplasm</location>
    </subcellularLocation>
</comment>
<comment type="similarity">
    <text evidence="7">Belongs to the glutamine synthetase family.</text>
</comment>
<organism>
    <name type="scientific">Staphylococcus aureus (strain MW2)</name>
    <dbReference type="NCBI Taxonomy" id="196620"/>
    <lineage>
        <taxon>Bacteria</taxon>
        <taxon>Bacillati</taxon>
        <taxon>Bacillota</taxon>
        <taxon>Bacilli</taxon>
        <taxon>Bacillales</taxon>
        <taxon>Staphylococcaceae</taxon>
        <taxon>Staphylococcus</taxon>
    </lineage>
</organism>
<gene>
    <name evidence="2" type="primary">glnA</name>
    <name type="ordered locus">MW1192</name>
</gene>
<evidence type="ECO:0000250" key="1">
    <source>
        <dbReference type="UniProtKB" id="P0A1P6"/>
    </source>
</evidence>
<evidence type="ECO:0000250" key="2">
    <source>
        <dbReference type="UniProtKB" id="P12425"/>
    </source>
</evidence>
<evidence type="ECO:0000250" key="3">
    <source>
        <dbReference type="UniProtKB" id="P77961"/>
    </source>
</evidence>
<evidence type="ECO:0000250" key="4">
    <source>
        <dbReference type="UniProtKB" id="P9WN39"/>
    </source>
</evidence>
<evidence type="ECO:0000255" key="5">
    <source>
        <dbReference type="PROSITE-ProRule" id="PRU01330"/>
    </source>
</evidence>
<evidence type="ECO:0000255" key="6">
    <source>
        <dbReference type="PROSITE-ProRule" id="PRU01331"/>
    </source>
</evidence>
<evidence type="ECO:0000305" key="7"/>
<accession>P0A039</accession>
<accession>Q59812</accession>
<name>GLN1A_STAAW</name>
<protein>
    <recommendedName>
        <fullName evidence="2">Glutamine synthetase</fullName>
        <shortName evidence="2">GS</shortName>
        <ecNumber evidence="2">6.3.1.2</ecNumber>
    </recommendedName>
    <alternativeName>
        <fullName evidence="2">Glutamate--ammonia ligase</fullName>
    </alternativeName>
    <alternativeName>
        <fullName evidence="2">Glutamine synthetase I alpha</fullName>
        <shortName evidence="2">GSI alpha</shortName>
    </alternativeName>
</protein>
<reference key="1">
    <citation type="journal article" date="2002" name="Lancet">
        <title>Genome and virulence determinants of high virulence community-acquired MRSA.</title>
        <authorList>
            <person name="Baba T."/>
            <person name="Takeuchi F."/>
            <person name="Kuroda M."/>
            <person name="Yuzawa H."/>
            <person name="Aoki K."/>
            <person name="Oguchi A."/>
            <person name="Nagai Y."/>
            <person name="Iwama N."/>
            <person name="Asano K."/>
            <person name="Naimi T."/>
            <person name="Kuroda H."/>
            <person name="Cui L."/>
            <person name="Yamamoto K."/>
            <person name="Hiramatsu K."/>
        </authorList>
    </citation>
    <scope>NUCLEOTIDE SEQUENCE [LARGE SCALE GENOMIC DNA]</scope>
    <source>
        <strain>MW2</strain>
    </source>
</reference>
<keyword id="KW-0067">ATP-binding</keyword>
<keyword id="KW-0963">Cytoplasm</keyword>
<keyword id="KW-0436">Ligase</keyword>
<keyword id="KW-0460">Magnesium</keyword>
<keyword id="KW-0479">Metal-binding</keyword>
<keyword id="KW-0547">Nucleotide-binding</keyword>
<proteinExistence type="inferred from homology"/>
<sequence>MPKRTFTKDDIRKFAEEENVRYLRLQFTDILGTIKNVEVPVSQLEKVLDNEMMFDGSSIEGFVRIEESDMYLHPDLDTWVIFPWTAGQGKVARLICDVYKTDGTPFEGDPRANLKRVLKEMEDLGFTDFNLGPEPEFFLFKLDEKGEPTLELNDDGGYFDLAPTDLGENCRRDIVLELEDMGFDIEASHHEVAPGQHEIDFKYADAVTACDNIQTFKLVVKTIARKHNLHATFMPKPLFGVNGSGMHFNVSLFKGKENAFFDPNTEMGLTETAYQFTAGVLKNARGFTAVCNPLVNSYKRLVPGYEAPCYIAWSGKNRSPLIRVPSSRGLSTRIEVRSVDPAANPYMALAAILEAGLDGIKNKLKVPEPVNQNIYEMNREEREAVGIQDLPSTLYTALKAMRENEVIKKALGNHIYNQFINSKSIEWDYYRTQVSEWERDQYMKQY</sequence>
<feature type="chain" id="PRO_0000153263" description="Glutamine synthetase">
    <location>
        <begin position="1"/>
        <end position="446"/>
    </location>
</feature>
<feature type="domain" description="GS beta-grasp" evidence="5">
    <location>
        <begin position="18"/>
        <end position="103"/>
    </location>
</feature>
<feature type="domain" description="GS catalytic" evidence="6">
    <location>
        <begin position="110"/>
        <end position="446"/>
    </location>
</feature>
<feature type="binding site" evidence="2">
    <location>
        <position position="134"/>
    </location>
    <ligand>
        <name>Mg(2+)</name>
        <dbReference type="ChEBI" id="CHEBI:18420"/>
        <label>1</label>
    </ligand>
</feature>
<feature type="binding site" evidence="2">
    <location>
        <position position="136"/>
    </location>
    <ligand>
        <name>Mg(2+)</name>
        <dbReference type="ChEBI" id="CHEBI:18420"/>
        <label>2</label>
    </ligand>
</feature>
<feature type="binding site" evidence="4">
    <location>
        <position position="186"/>
    </location>
    <ligand>
        <name>ATP</name>
        <dbReference type="ChEBI" id="CHEBI:30616"/>
    </ligand>
</feature>
<feature type="binding site" evidence="2">
    <location>
        <position position="191"/>
    </location>
    <ligand>
        <name>Mg(2+)</name>
        <dbReference type="ChEBI" id="CHEBI:18420"/>
        <label>2</label>
    </ligand>
</feature>
<feature type="binding site" evidence="2">
    <location>
        <position position="198"/>
    </location>
    <ligand>
        <name>Mg(2+)</name>
        <dbReference type="ChEBI" id="CHEBI:18420"/>
        <label>2</label>
    </ligand>
</feature>
<feature type="binding site" evidence="4">
    <location>
        <begin position="242"/>
        <end position="243"/>
    </location>
    <ligand>
        <name>L-glutamate</name>
        <dbReference type="ChEBI" id="CHEBI:29985"/>
    </ligand>
</feature>
<feature type="binding site" evidence="2">
    <location>
        <position position="243"/>
    </location>
    <ligand>
        <name>L-glutamate</name>
        <dbReference type="ChEBI" id="CHEBI:29985"/>
    </ligand>
</feature>
<feature type="binding site" evidence="2">
    <location>
        <position position="247"/>
    </location>
    <ligand>
        <name>Mg(2+)</name>
        <dbReference type="ChEBI" id="CHEBI:18420"/>
        <label>1</label>
    </ligand>
</feature>
<feature type="binding site" evidence="3">
    <location>
        <position position="251"/>
    </location>
    <ligand>
        <name>ATP</name>
        <dbReference type="ChEBI" id="CHEBI:30616"/>
    </ligand>
</feature>
<feature type="binding site" evidence="1">
    <location>
        <position position="300"/>
    </location>
    <ligand>
        <name>L-glutamate</name>
        <dbReference type="ChEBI" id="CHEBI:29985"/>
    </ligand>
</feature>
<feature type="binding site" evidence="1">
    <location>
        <position position="306"/>
    </location>
    <ligand>
        <name>L-glutamate</name>
        <dbReference type="ChEBI" id="CHEBI:29985"/>
    </ligand>
</feature>
<feature type="binding site" evidence="4">
    <location>
        <position position="318"/>
    </location>
    <ligand>
        <name>ATP</name>
        <dbReference type="ChEBI" id="CHEBI:30616"/>
    </ligand>
</feature>
<feature type="binding site" evidence="4">
    <location>
        <position position="318"/>
    </location>
    <ligand>
        <name>L-glutamate</name>
        <dbReference type="ChEBI" id="CHEBI:29985"/>
    </ligand>
</feature>
<feature type="binding site" evidence="4">
    <location>
        <position position="323"/>
    </location>
    <ligand>
        <name>ATP</name>
        <dbReference type="ChEBI" id="CHEBI:30616"/>
    </ligand>
</feature>
<feature type="binding site" evidence="2">
    <location>
        <position position="335"/>
    </location>
    <ligand>
        <name>Mg(2+)</name>
        <dbReference type="ChEBI" id="CHEBI:18420"/>
        <label>1</label>
    </ligand>
</feature>
<feature type="binding site" evidence="1">
    <location>
        <position position="337"/>
    </location>
    <ligand>
        <name>L-glutamate</name>
        <dbReference type="ChEBI" id="CHEBI:29985"/>
    </ligand>
</feature>
<feature type="site" description="Important for inhibition by glutamine" evidence="2">
    <location>
        <position position="64"/>
    </location>
</feature>
<dbReference type="EC" id="6.3.1.2" evidence="2"/>
<dbReference type="EMBL" id="BA000033">
    <property type="protein sequence ID" value="BAB95057.1"/>
    <property type="molecule type" value="Genomic_DNA"/>
</dbReference>
<dbReference type="RefSeq" id="WP_001126603.1">
    <property type="nucleotide sequence ID" value="NC_003923.1"/>
</dbReference>
<dbReference type="SMR" id="P0A039"/>
<dbReference type="GeneID" id="98345625"/>
<dbReference type="KEGG" id="sam:MW1192"/>
<dbReference type="HOGENOM" id="CLU_017290_1_3_9"/>
<dbReference type="GO" id="GO:0005737">
    <property type="term" value="C:cytoplasm"/>
    <property type="evidence" value="ECO:0007669"/>
    <property type="project" value="UniProtKB-SubCell"/>
</dbReference>
<dbReference type="GO" id="GO:0005524">
    <property type="term" value="F:ATP binding"/>
    <property type="evidence" value="ECO:0007669"/>
    <property type="project" value="UniProtKB-KW"/>
</dbReference>
<dbReference type="GO" id="GO:0004356">
    <property type="term" value="F:glutamine synthetase activity"/>
    <property type="evidence" value="ECO:0007669"/>
    <property type="project" value="UniProtKB-EC"/>
</dbReference>
<dbReference type="GO" id="GO:0046872">
    <property type="term" value="F:metal ion binding"/>
    <property type="evidence" value="ECO:0007669"/>
    <property type="project" value="UniProtKB-KW"/>
</dbReference>
<dbReference type="GO" id="GO:0006542">
    <property type="term" value="P:glutamine biosynthetic process"/>
    <property type="evidence" value="ECO:0007669"/>
    <property type="project" value="InterPro"/>
</dbReference>
<dbReference type="FunFam" id="3.10.20.70:FF:000005">
    <property type="entry name" value="Glutamine synthetase"/>
    <property type="match status" value="1"/>
</dbReference>
<dbReference type="FunFam" id="3.30.590.10:FF:000003">
    <property type="entry name" value="Glutamine synthetase 2"/>
    <property type="match status" value="1"/>
</dbReference>
<dbReference type="Gene3D" id="3.10.20.70">
    <property type="entry name" value="Glutamine synthetase, N-terminal domain"/>
    <property type="match status" value="1"/>
</dbReference>
<dbReference type="Gene3D" id="3.30.590.10">
    <property type="entry name" value="Glutamine synthetase/guanido kinase, catalytic domain"/>
    <property type="match status" value="1"/>
</dbReference>
<dbReference type="InterPro" id="IPR008147">
    <property type="entry name" value="Gln_synt_N"/>
</dbReference>
<dbReference type="InterPro" id="IPR036651">
    <property type="entry name" value="Gln_synt_N_sf"/>
</dbReference>
<dbReference type="InterPro" id="IPR014746">
    <property type="entry name" value="Gln_synth/guanido_kin_cat_dom"/>
</dbReference>
<dbReference type="InterPro" id="IPR008146">
    <property type="entry name" value="Gln_synth_cat_dom"/>
</dbReference>
<dbReference type="InterPro" id="IPR027303">
    <property type="entry name" value="Gln_synth_gly_rich_site"/>
</dbReference>
<dbReference type="InterPro" id="IPR004809">
    <property type="entry name" value="Gln_synth_I"/>
</dbReference>
<dbReference type="InterPro" id="IPR027302">
    <property type="entry name" value="Gln_synth_N_conserv_site"/>
</dbReference>
<dbReference type="NCBIfam" id="TIGR00653">
    <property type="entry name" value="GlnA"/>
    <property type="match status" value="1"/>
</dbReference>
<dbReference type="PANTHER" id="PTHR43785">
    <property type="entry name" value="GAMMA-GLUTAMYLPUTRESCINE SYNTHETASE"/>
    <property type="match status" value="1"/>
</dbReference>
<dbReference type="PANTHER" id="PTHR43785:SF12">
    <property type="entry name" value="TYPE-1 GLUTAMINE SYNTHETASE 2"/>
    <property type="match status" value="1"/>
</dbReference>
<dbReference type="Pfam" id="PF00120">
    <property type="entry name" value="Gln-synt_C"/>
    <property type="match status" value="1"/>
</dbReference>
<dbReference type="Pfam" id="PF03951">
    <property type="entry name" value="Gln-synt_N"/>
    <property type="match status" value="1"/>
</dbReference>
<dbReference type="SMART" id="SM01230">
    <property type="entry name" value="Gln-synt_C"/>
    <property type="match status" value="1"/>
</dbReference>
<dbReference type="SUPFAM" id="SSF54368">
    <property type="entry name" value="Glutamine synthetase, N-terminal domain"/>
    <property type="match status" value="1"/>
</dbReference>
<dbReference type="SUPFAM" id="SSF55931">
    <property type="entry name" value="Glutamine synthetase/guanido kinase"/>
    <property type="match status" value="1"/>
</dbReference>
<dbReference type="PROSITE" id="PS00180">
    <property type="entry name" value="GLNA_1"/>
    <property type="match status" value="1"/>
</dbReference>
<dbReference type="PROSITE" id="PS00181">
    <property type="entry name" value="GLNA_ATP"/>
    <property type="match status" value="1"/>
</dbReference>
<dbReference type="PROSITE" id="PS51986">
    <property type="entry name" value="GS_BETA_GRASP"/>
    <property type="match status" value="1"/>
</dbReference>
<dbReference type="PROSITE" id="PS51987">
    <property type="entry name" value="GS_CATALYTIC"/>
    <property type="match status" value="1"/>
</dbReference>